<accession>Q0BKV1</accession>
<dbReference type="EC" id="4.2.1.11" evidence="1"/>
<dbReference type="EMBL" id="CP000437">
    <property type="protein sequence ID" value="ABI83283.1"/>
    <property type="molecule type" value="Genomic_DNA"/>
</dbReference>
<dbReference type="RefSeq" id="WP_011648756.1">
    <property type="nucleotide sequence ID" value="NC_017463.1"/>
</dbReference>
<dbReference type="SMR" id="Q0BKV1"/>
<dbReference type="KEGG" id="fth:FTH_1477"/>
<dbReference type="UniPathway" id="UPA00109">
    <property type="reaction ID" value="UER00187"/>
</dbReference>
<dbReference type="GO" id="GO:0009986">
    <property type="term" value="C:cell surface"/>
    <property type="evidence" value="ECO:0007669"/>
    <property type="project" value="UniProtKB-SubCell"/>
</dbReference>
<dbReference type="GO" id="GO:0005576">
    <property type="term" value="C:extracellular region"/>
    <property type="evidence" value="ECO:0007669"/>
    <property type="project" value="UniProtKB-SubCell"/>
</dbReference>
<dbReference type="GO" id="GO:0000015">
    <property type="term" value="C:phosphopyruvate hydratase complex"/>
    <property type="evidence" value="ECO:0007669"/>
    <property type="project" value="InterPro"/>
</dbReference>
<dbReference type="GO" id="GO:0000287">
    <property type="term" value="F:magnesium ion binding"/>
    <property type="evidence" value="ECO:0007669"/>
    <property type="project" value="UniProtKB-UniRule"/>
</dbReference>
<dbReference type="GO" id="GO:0004634">
    <property type="term" value="F:phosphopyruvate hydratase activity"/>
    <property type="evidence" value="ECO:0007669"/>
    <property type="project" value="UniProtKB-UniRule"/>
</dbReference>
<dbReference type="GO" id="GO:0006096">
    <property type="term" value="P:glycolytic process"/>
    <property type="evidence" value="ECO:0007669"/>
    <property type="project" value="UniProtKB-UniRule"/>
</dbReference>
<dbReference type="CDD" id="cd03313">
    <property type="entry name" value="enolase"/>
    <property type="match status" value="1"/>
</dbReference>
<dbReference type="FunFam" id="3.20.20.120:FF:000001">
    <property type="entry name" value="Enolase"/>
    <property type="match status" value="1"/>
</dbReference>
<dbReference type="FunFam" id="3.30.390.10:FF:000001">
    <property type="entry name" value="Enolase"/>
    <property type="match status" value="1"/>
</dbReference>
<dbReference type="Gene3D" id="3.20.20.120">
    <property type="entry name" value="Enolase-like C-terminal domain"/>
    <property type="match status" value="1"/>
</dbReference>
<dbReference type="Gene3D" id="3.30.390.10">
    <property type="entry name" value="Enolase-like, N-terminal domain"/>
    <property type="match status" value="1"/>
</dbReference>
<dbReference type="HAMAP" id="MF_00318">
    <property type="entry name" value="Enolase"/>
    <property type="match status" value="1"/>
</dbReference>
<dbReference type="InterPro" id="IPR000941">
    <property type="entry name" value="Enolase"/>
</dbReference>
<dbReference type="InterPro" id="IPR036849">
    <property type="entry name" value="Enolase-like_C_sf"/>
</dbReference>
<dbReference type="InterPro" id="IPR029017">
    <property type="entry name" value="Enolase-like_N"/>
</dbReference>
<dbReference type="InterPro" id="IPR020810">
    <property type="entry name" value="Enolase_C"/>
</dbReference>
<dbReference type="InterPro" id="IPR020809">
    <property type="entry name" value="Enolase_CS"/>
</dbReference>
<dbReference type="InterPro" id="IPR020811">
    <property type="entry name" value="Enolase_N"/>
</dbReference>
<dbReference type="NCBIfam" id="TIGR01060">
    <property type="entry name" value="eno"/>
    <property type="match status" value="1"/>
</dbReference>
<dbReference type="PANTHER" id="PTHR11902">
    <property type="entry name" value="ENOLASE"/>
    <property type="match status" value="1"/>
</dbReference>
<dbReference type="PANTHER" id="PTHR11902:SF1">
    <property type="entry name" value="ENOLASE"/>
    <property type="match status" value="1"/>
</dbReference>
<dbReference type="Pfam" id="PF00113">
    <property type="entry name" value="Enolase_C"/>
    <property type="match status" value="1"/>
</dbReference>
<dbReference type="Pfam" id="PF03952">
    <property type="entry name" value="Enolase_N"/>
    <property type="match status" value="1"/>
</dbReference>
<dbReference type="PIRSF" id="PIRSF001400">
    <property type="entry name" value="Enolase"/>
    <property type="match status" value="1"/>
</dbReference>
<dbReference type="PRINTS" id="PR00148">
    <property type="entry name" value="ENOLASE"/>
</dbReference>
<dbReference type="SFLD" id="SFLDS00001">
    <property type="entry name" value="Enolase"/>
    <property type="match status" value="1"/>
</dbReference>
<dbReference type="SFLD" id="SFLDF00002">
    <property type="entry name" value="enolase"/>
    <property type="match status" value="1"/>
</dbReference>
<dbReference type="SMART" id="SM01192">
    <property type="entry name" value="Enolase_C"/>
    <property type="match status" value="1"/>
</dbReference>
<dbReference type="SMART" id="SM01193">
    <property type="entry name" value="Enolase_N"/>
    <property type="match status" value="1"/>
</dbReference>
<dbReference type="SUPFAM" id="SSF51604">
    <property type="entry name" value="Enolase C-terminal domain-like"/>
    <property type="match status" value="1"/>
</dbReference>
<dbReference type="SUPFAM" id="SSF54826">
    <property type="entry name" value="Enolase N-terminal domain-like"/>
    <property type="match status" value="1"/>
</dbReference>
<dbReference type="PROSITE" id="PS00164">
    <property type="entry name" value="ENOLASE"/>
    <property type="match status" value="1"/>
</dbReference>
<sequence length="456" mass="49511">MSSQIKQVFARQILDSRGNPTVEVDVVLESGAFGRAAVPSGASTGIREALELRDGNKALFLGKSVYKAVENVNTKIAQAVKGLDALDQRLIDKTMIELDGSENKKNLGANAILGVSLATARAAASHLRKPFYRYLMDVKEYLMPVPMMNVINGGSHADNNVDMQEFMIVPAGFDTFSEALRCGTEVFHTLKKVLIADGYSVAGVGDEGGYAPDLPSNEAAIEAILKAVKEAGYEPGKHVFIALDPASSEFYKDGKYELKSENKSLTTEEMIDYYAAWVEKYPIVSIEDGLAEEDWAGWKLLTEKLGNKVQLVGDDLFVTNPSILAKGIEKGIANSILIKLNQIGTLTETFEAMAMAGQAGYTCVVSHRSGETSDTIIADLAVATCSGQIKTGSLSRSDRIAKYNQLLRIEEELGENAIYPGIKAFVFNSDEEVEEVVQEIIVEDSEAEKVVVQVEE</sequence>
<gene>
    <name evidence="1" type="primary">eno</name>
    <name type="ordered locus">FTH_1477</name>
</gene>
<name>ENO_FRATO</name>
<feature type="chain" id="PRO_0000267036" description="Enolase">
    <location>
        <begin position="1"/>
        <end position="456"/>
    </location>
</feature>
<feature type="active site" description="Proton donor" evidence="1">
    <location>
        <position position="207"/>
    </location>
</feature>
<feature type="active site" description="Proton acceptor" evidence="1">
    <location>
        <position position="339"/>
    </location>
</feature>
<feature type="binding site" evidence="1">
    <location>
        <position position="164"/>
    </location>
    <ligand>
        <name>(2R)-2-phosphoglycerate</name>
        <dbReference type="ChEBI" id="CHEBI:58289"/>
    </ligand>
</feature>
<feature type="binding site" evidence="1">
    <location>
        <position position="244"/>
    </location>
    <ligand>
        <name>Mg(2+)</name>
        <dbReference type="ChEBI" id="CHEBI:18420"/>
    </ligand>
</feature>
<feature type="binding site" evidence="1">
    <location>
        <position position="287"/>
    </location>
    <ligand>
        <name>Mg(2+)</name>
        <dbReference type="ChEBI" id="CHEBI:18420"/>
    </ligand>
</feature>
<feature type="binding site" evidence="1">
    <location>
        <position position="314"/>
    </location>
    <ligand>
        <name>Mg(2+)</name>
        <dbReference type="ChEBI" id="CHEBI:18420"/>
    </ligand>
</feature>
<feature type="binding site" evidence="1">
    <location>
        <position position="339"/>
    </location>
    <ligand>
        <name>(2R)-2-phosphoglycerate</name>
        <dbReference type="ChEBI" id="CHEBI:58289"/>
    </ligand>
</feature>
<feature type="binding site" evidence="1">
    <location>
        <position position="368"/>
    </location>
    <ligand>
        <name>(2R)-2-phosphoglycerate</name>
        <dbReference type="ChEBI" id="CHEBI:58289"/>
    </ligand>
</feature>
<feature type="binding site" evidence="1">
    <location>
        <position position="369"/>
    </location>
    <ligand>
        <name>(2R)-2-phosphoglycerate</name>
        <dbReference type="ChEBI" id="CHEBI:58289"/>
    </ligand>
</feature>
<feature type="binding site" evidence="1">
    <location>
        <position position="390"/>
    </location>
    <ligand>
        <name>(2R)-2-phosphoglycerate</name>
        <dbReference type="ChEBI" id="CHEBI:58289"/>
    </ligand>
</feature>
<reference key="1">
    <citation type="journal article" date="2006" name="J. Bacteriol.">
        <title>Chromosome rearrangement and diversification of Francisella tularensis revealed by the type B (OSU18) genome sequence.</title>
        <authorList>
            <person name="Petrosino J.F."/>
            <person name="Xiang Q."/>
            <person name="Karpathy S.E."/>
            <person name="Jiang H."/>
            <person name="Yerrapragada S."/>
            <person name="Liu Y."/>
            <person name="Gioia J."/>
            <person name="Hemphill L."/>
            <person name="Gonzalez A."/>
            <person name="Raghavan T.M."/>
            <person name="Uzman A."/>
            <person name="Fox G.E."/>
            <person name="Highlander S."/>
            <person name="Reichard M."/>
            <person name="Morton R.J."/>
            <person name="Clinkenbeard K.D."/>
            <person name="Weinstock G.M."/>
        </authorList>
    </citation>
    <scope>NUCLEOTIDE SEQUENCE [LARGE SCALE GENOMIC DNA]</scope>
    <source>
        <strain>OSU18</strain>
    </source>
</reference>
<keyword id="KW-0963">Cytoplasm</keyword>
<keyword id="KW-0324">Glycolysis</keyword>
<keyword id="KW-0456">Lyase</keyword>
<keyword id="KW-0460">Magnesium</keyword>
<keyword id="KW-0479">Metal-binding</keyword>
<keyword id="KW-0964">Secreted</keyword>
<comment type="function">
    <text evidence="1">Catalyzes the reversible conversion of 2-phosphoglycerate (2-PG) into phosphoenolpyruvate (PEP). It is essential for the degradation of carbohydrates via glycolysis.</text>
</comment>
<comment type="catalytic activity">
    <reaction evidence="1">
        <text>(2R)-2-phosphoglycerate = phosphoenolpyruvate + H2O</text>
        <dbReference type="Rhea" id="RHEA:10164"/>
        <dbReference type="ChEBI" id="CHEBI:15377"/>
        <dbReference type="ChEBI" id="CHEBI:58289"/>
        <dbReference type="ChEBI" id="CHEBI:58702"/>
        <dbReference type="EC" id="4.2.1.11"/>
    </reaction>
</comment>
<comment type="cofactor">
    <cofactor evidence="1">
        <name>Mg(2+)</name>
        <dbReference type="ChEBI" id="CHEBI:18420"/>
    </cofactor>
    <text evidence="1">Binds a second Mg(2+) ion via substrate during catalysis.</text>
</comment>
<comment type="pathway">
    <text evidence="1">Carbohydrate degradation; glycolysis; pyruvate from D-glyceraldehyde 3-phosphate: step 4/5.</text>
</comment>
<comment type="subunit">
    <text evidence="1">Component of the RNA degradosome, a multiprotein complex involved in RNA processing and mRNA degradation.</text>
</comment>
<comment type="subcellular location">
    <subcellularLocation>
        <location evidence="1">Cytoplasm</location>
    </subcellularLocation>
    <subcellularLocation>
        <location evidence="1">Secreted</location>
    </subcellularLocation>
    <subcellularLocation>
        <location evidence="1">Cell surface</location>
    </subcellularLocation>
    <text evidence="1">Fractions of enolase are present in both the cytoplasm and on the cell surface.</text>
</comment>
<comment type="similarity">
    <text evidence="1">Belongs to the enolase family.</text>
</comment>
<evidence type="ECO:0000255" key="1">
    <source>
        <dbReference type="HAMAP-Rule" id="MF_00318"/>
    </source>
</evidence>
<proteinExistence type="inferred from homology"/>
<organism>
    <name type="scientific">Francisella tularensis subsp. holarctica (strain OSU18)</name>
    <dbReference type="NCBI Taxonomy" id="393011"/>
    <lineage>
        <taxon>Bacteria</taxon>
        <taxon>Pseudomonadati</taxon>
        <taxon>Pseudomonadota</taxon>
        <taxon>Gammaproteobacteria</taxon>
        <taxon>Thiotrichales</taxon>
        <taxon>Francisellaceae</taxon>
        <taxon>Francisella</taxon>
    </lineage>
</organism>
<protein>
    <recommendedName>
        <fullName evidence="1">Enolase</fullName>
        <ecNumber evidence="1">4.2.1.11</ecNumber>
    </recommendedName>
    <alternativeName>
        <fullName evidence="1">2-phospho-D-glycerate hydro-lyase</fullName>
    </alternativeName>
    <alternativeName>
        <fullName evidence="1">2-phosphoglycerate dehydratase</fullName>
    </alternativeName>
</protein>